<comment type="catalytic activity">
    <reaction evidence="1">
        <text>L-aspartate + NH4(+) + ATP = L-asparagine + AMP + diphosphate + H(+)</text>
        <dbReference type="Rhea" id="RHEA:11372"/>
        <dbReference type="ChEBI" id="CHEBI:15378"/>
        <dbReference type="ChEBI" id="CHEBI:28938"/>
        <dbReference type="ChEBI" id="CHEBI:29991"/>
        <dbReference type="ChEBI" id="CHEBI:30616"/>
        <dbReference type="ChEBI" id="CHEBI:33019"/>
        <dbReference type="ChEBI" id="CHEBI:58048"/>
        <dbReference type="ChEBI" id="CHEBI:456215"/>
        <dbReference type="EC" id="6.3.1.1"/>
    </reaction>
</comment>
<comment type="pathway">
    <text evidence="1">Amino-acid biosynthesis; L-asparagine biosynthesis; L-asparagine from L-aspartate (ammonia route): step 1/1.</text>
</comment>
<comment type="subcellular location">
    <subcellularLocation>
        <location evidence="1">Cytoplasm</location>
    </subcellularLocation>
</comment>
<comment type="similarity">
    <text evidence="1">Belongs to the class-II aminoacyl-tRNA synthetase family. AsnA subfamily.</text>
</comment>
<dbReference type="EC" id="6.3.1.1" evidence="1"/>
<dbReference type="EMBL" id="CP000644">
    <property type="protein sequence ID" value="ABO88438.1"/>
    <property type="molecule type" value="Genomic_DNA"/>
</dbReference>
<dbReference type="RefSeq" id="WP_005318480.1">
    <property type="nucleotide sequence ID" value="NC_009348.1"/>
</dbReference>
<dbReference type="SMR" id="A4SHR6"/>
<dbReference type="STRING" id="29491.GCA_000820065_01322"/>
<dbReference type="KEGG" id="asa:ASA_0247"/>
<dbReference type="eggNOG" id="COG2502">
    <property type="taxonomic scope" value="Bacteria"/>
</dbReference>
<dbReference type="HOGENOM" id="CLU_071543_0_0_6"/>
<dbReference type="UniPathway" id="UPA00134">
    <property type="reaction ID" value="UER00194"/>
</dbReference>
<dbReference type="Proteomes" id="UP000000225">
    <property type="component" value="Chromosome"/>
</dbReference>
<dbReference type="GO" id="GO:0005829">
    <property type="term" value="C:cytosol"/>
    <property type="evidence" value="ECO:0007669"/>
    <property type="project" value="TreeGrafter"/>
</dbReference>
<dbReference type="GO" id="GO:0004071">
    <property type="term" value="F:aspartate-ammonia ligase activity"/>
    <property type="evidence" value="ECO:0007669"/>
    <property type="project" value="UniProtKB-UniRule"/>
</dbReference>
<dbReference type="GO" id="GO:0005524">
    <property type="term" value="F:ATP binding"/>
    <property type="evidence" value="ECO:0007669"/>
    <property type="project" value="UniProtKB-UniRule"/>
</dbReference>
<dbReference type="GO" id="GO:0070981">
    <property type="term" value="P:L-asparagine biosynthetic process"/>
    <property type="evidence" value="ECO:0007669"/>
    <property type="project" value="UniProtKB-UniRule"/>
</dbReference>
<dbReference type="Gene3D" id="3.30.930.10">
    <property type="entry name" value="Bira Bifunctional Protein, Domain 2"/>
    <property type="match status" value="1"/>
</dbReference>
<dbReference type="HAMAP" id="MF_00555">
    <property type="entry name" value="AsnA"/>
    <property type="match status" value="1"/>
</dbReference>
<dbReference type="InterPro" id="IPR006195">
    <property type="entry name" value="aa-tRNA-synth_II"/>
</dbReference>
<dbReference type="InterPro" id="IPR045864">
    <property type="entry name" value="aa-tRNA-synth_II/BPL/LPL"/>
</dbReference>
<dbReference type="InterPro" id="IPR004618">
    <property type="entry name" value="AsnA"/>
</dbReference>
<dbReference type="NCBIfam" id="TIGR00669">
    <property type="entry name" value="asnA"/>
    <property type="match status" value="1"/>
</dbReference>
<dbReference type="PANTHER" id="PTHR30073">
    <property type="entry name" value="ASPARTATE--AMMONIA LIGASE"/>
    <property type="match status" value="1"/>
</dbReference>
<dbReference type="PANTHER" id="PTHR30073:SF5">
    <property type="entry name" value="ASPARTATE--AMMONIA LIGASE"/>
    <property type="match status" value="1"/>
</dbReference>
<dbReference type="Pfam" id="PF03590">
    <property type="entry name" value="AsnA"/>
    <property type="match status" value="1"/>
</dbReference>
<dbReference type="PIRSF" id="PIRSF001555">
    <property type="entry name" value="Asp_ammon_ligase"/>
    <property type="match status" value="1"/>
</dbReference>
<dbReference type="SUPFAM" id="SSF55681">
    <property type="entry name" value="Class II aaRS and biotin synthetases"/>
    <property type="match status" value="1"/>
</dbReference>
<dbReference type="PROSITE" id="PS50862">
    <property type="entry name" value="AA_TRNA_LIGASE_II"/>
    <property type="match status" value="1"/>
</dbReference>
<accession>A4SHR6</accession>
<gene>
    <name evidence="1" type="primary">asnA</name>
    <name type="ordered locus">ASA_0247</name>
</gene>
<name>ASNA_AERS4</name>
<organism>
    <name type="scientific">Aeromonas salmonicida (strain A449)</name>
    <dbReference type="NCBI Taxonomy" id="382245"/>
    <lineage>
        <taxon>Bacteria</taxon>
        <taxon>Pseudomonadati</taxon>
        <taxon>Pseudomonadota</taxon>
        <taxon>Gammaproteobacteria</taxon>
        <taxon>Aeromonadales</taxon>
        <taxon>Aeromonadaceae</taxon>
        <taxon>Aeromonas</taxon>
    </lineage>
</organism>
<feature type="chain" id="PRO_1000017933" description="Aspartate--ammonia ligase">
    <location>
        <begin position="1"/>
        <end position="330"/>
    </location>
</feature>
<proteinExistence type="inferred from homology"/>
<sequence length="330" mass="36949">MKQHYIRSQQQISFVKEMFSRQLAQQLGLMEVQAPILSRVGDGTQDNLSGSENAVQVKVKTLPGHSYEVVHSLAKWKRQTLGRFGFGPGEGIYTHMKALRPDEDKLTPIHSVYVDQWDWEKVMPSERRDLAYLQETVRGIWAAIKATERAVCAEHELTPFLPGEIQFLHSEALLARYPDLDAKGRERAIAKELGAVFLIGIGGALSHGERHDVRAPDYDDWSSHSELGLAGLNGDILVWNPVLEDSFEISSMGIRVDAEALRRQLAITGDEGRLQYDWHRDLLAERMPQTIGGGIGQSRLAMLLLQKEHIGQVQVGVWPSEMKAAIPGML</sequence>
<evidence type="ECO:0000255" key="1">
    <source>
        <dbReference type="HAMAP-Rule" id="MF_00555"/>
    </source>
</evidence>
<reference key="1">
    <citation type="journal article" date="2008" name="BMC Genomics">
        <title>The genome of Aeromonas salmonicida subsp. salmonicida A449: insights into the evolution of a fish pathogen.</title>
        <authorList>
            <person name="Reith M.E."/>
            <person name="Singh R.K."/>
            <person name="Curtis B."/>
            <person name="Boyd J.M."/>
            <person name="Bouevitch A."/>
            <person name="Kimball J."/>
            <person name="Munholland J."/>
            <person name="Murphy C."/>
            <person name="Sarty D."/>
            <person name="Williams J."/>
            <person name="Nash J.H."/>
            <person name="Johnson S.C."/>
            <person name="Brown L.L."/>
        </authorList>
    </citation>
    <scope>NUCLEOTIDE SEQUENCE [LARGE SCALE GENOMIC DNA]</scope>
    <source>
        <strain>A449</strain>
    </source>
</reference>
<keyword id="KW-0028">Amino-acid biosynthesis</keyword>
<keyword id="KW-0061">Asparagine biosynthesis</keyword>
<keyword id="KW-0067">ATP-binding</keyword>
<keyword id="KW-0963">Cytoplasm</keyword>
<keyword id="KW-0436">Ligase</keyword>
<keyword id="KW-0547">Nucleotide-binding</keyword>
<protein>
    <recommendedName>
        <fullName evidence="1">Aspartate--ammonia ligase</fullName>
        <ecNumber evidence="1">6.3.1.1</ecNumber>
    </recommendedName>
    <alternativeName>
        <fullName evidence="1">Asparagine synthetase A</fullName>
    </alternativeName>
</protein>